<proteinExistence type="inferred from homology"/>
<sequence>MIPVIALVGRPNVGKSTLFNRLTHTRDALVADFPGLTRDRKYGRAEVEGHEFIVVDTGGIDGTEDGVETKMAGQSLLAIEEADIVLFMVDARAGLMPADQGIAQHLRSREKATFLVANKTDGIDPDTATADFYSLGLGEVHAIAASHGRGVTQLIEDVMAPYMDAEEPEVELTEEEENAAYWAEQEAQGEDVPPEDPEDDFDPRTLPIKLAIVGRPNVGKSTLTNRILGEDRVVVYDMPGTTRDSIYIPMTRDDREYILIDTAGVRKRGKITETVEKFSVIKTLQAIEDSNVVLLVIDARDGISDQDLSLLGFILNSGRSLVIAVNKWDGMTEEARAQVKDMLDLRLGFVDFARIHFISALHGSGVGNLFESVQEAYDCSTKRVGTSLLTRIMQMAEEDHQPPLVRGRRVKLKYAHAGGYNPPIVVIHGNQVTDLSDSYKRYLMNYFRRSLKVMGTPIRIQFKEGENPFAGKRNPLTPNQMRKRKRLMSHLKKGK</sequence>
<feature type="chain" id="PRO_0000179077" description="GTPase Der">
    <location>
        <begin position="1"/>
        <end position="495"/>
    </location>
</feature>
<feature type="domain" description="EngA-type G 1">
    <location>
        <begin position="3"/>
        <end position="166"/>
    </location>
</feature>
<feature type="domain" description="EngA-type G 2">
    <location>
        <begin position="208"/>
        <end position="381"/>
    </location>
</feature>
<feature type="domain" description="KH-like" evidence="1">
    <location>
        <begin position="382"/>
        <end position="466"/>
    </location>
</feature>
<feature type="binding site" evidence="1">
    <location>
        <begin position="9"/>
        <end position="16"/>
    </location>
    <ligand>
        <name>GTP</name>
        <dbReference type="ChEBI" id="CHEBI:37565"/>
        <label>1</label>
    </ligand>
</feature>
<feature type="binding site" evidence="1">
    <location>
        <begin position="56"/>
        <end position="60"/>
    </location>
    <ligand>
        <name>GTP</name>
        <dbReference type="ChEBI" id="CHEBI:37565"/>
        <label>1</label>
    </ligand>
</feature>
<feature type="binding site" evidence="1">
    <location>
        <begin position="118"/>
        <end position="121"/>
    </location>
    <ligand>
        <name>GTP</name>
        <dbReference type="ChEBI" id="CHEBI:37565"/>
        <label>1</label>
    </ligand>
</feature>
<feature type="binding site" evidence="1">
    <location>
        <begin position="214"/>
        <end position="221"/>
    </location>
    <ligand>
        <name>GTP</name>
        <dbReference type="ChEBI" id="CHEBI:37565"/>
        <label>2</label>
    </ligand>
</feature>
<feature type="binding site" evidence="1">
    <location>
        <begin position="261"/>
        <end position="265"/>
    </location>
    <ligand>
        <name>GTP</name>
        <dbReference type="ChEBI" id="CHEBI:37565"/>
        <label>2</label>
    </ligand>
</feature>
<feature type="binding site" evidence="1">
    <location>
        <begin position="326"/>
        <end position="329"/>
    </location>
    <ligand>
        <name>GTP</name>
        <dbReference type="ChEBI" id="CHEBI:37565"/>
        <label>2</label>
    </ligand>
</feature>
<keyword id="KW-0342">GTP-binding</keyword>
<keyword id="KW-0547">Nucleotide-binding</keyword>
<keyword id="KW-1185">Reference proteome</keyword>
<keyword id="KW-0677">Repeat</keyword>
<keyword id="KW-0690">Ribosome biogenesis</keyword>
<gene>
    <name evidence="1" type="primary">der</name>
    <name type="synonym">engA</name>
    <name type="ordered locus">YPO2875</name>
    <name type="ordered locus">y1357</name>
    <name type="ordered locus">YP_2741</name>
</gene>
<organism>
    <name type="scientific">Yersinia pestis</name>
    <dbReference type="NCBI Taxonomy" id="632"/>
    <lineage>
        <taxon>Bacteria</taxon>
        <taxon>Pseudomonadati</taxon>
        <taxon>Pseudomonadota</taxon>
        <taxon>Gammaproteobacteria</taxon>
        <taxon>Enterobacterales</taxon>
        <taxon>Yersiniaceae</taxon>
        <taxon>Yersinia</taxon>
    </lineage>
</organism>
<protein>
    <recommendedName>
        <fullName evidence="1">GTPase Der</fullName>
    </recommendedName>
    <alternativeName>
        <fullName evidence="1">GTP-binding protein EngA</fullName>
    </alternativeName>
</protein>
<dbReference type="EMBL" id="AL590842">
    <property type="protein sequence ID" value="CAL21486.1"/>
    <property type="molecule type" value="Genomic_DNA"/>
</dbReference>
<dbReference type="EMBL" id="AE009952">
    <property type="protein sequence ID" value="AAM84930.1"/>
    <property type="molecule type" value="Genomic_DNA"/>
</dbReference>
<dbReference type="EMBL" id="AE017042">
    <property type="protein sequence ID" value="AAS62929.1"/>
    <property type="molecule type" value="Genomic_DNA"/>
</dbReference>
<dbReference type="PIR" id="AC0350">
    <property type="entry name" value="AC0350"/>
</dbReference>
<dbReference type="RefSeq" id="WP_002209813.1">
    <property type="nucleotide sequence ID" value="NZ_WUCL01000033.1"/>
</dbReference>
<dbReference type="RefSeq" id="YP_002347810.1">
    <property type="nucleotide sequence ID" value="NC_003143.1"/>
</dbReference>
<dbReference type="SMR" id="Q8ZCT9"/>
<dbReference type="IntAct" id="Q8ZCT9">
    <property type="interactions" value="6"/>
</dbReference>
<dbReference type="STRING" id="214092.YPO2875"/>
<dbReference type="PaxDb" id="214092-YPO2875"/>
<dbReference type="DNASU" id="1146304"/>
<dbReference type="EnsemblBacteria" id="AAS62929">
    <property type="protein sequence ID" value="AAS62929"/>
    <property type="gene ID" value="YP_2741"/>
</dbReference>
<dbReference type="GeneID" id="57975832"/>
<dbReference type="KEGG" id="ype:YPO2875"/>
<dbReference type="KEGG" id="ypk:y1357"/>
<dbReference type="KEGG" id="ypm:YP_2741"/>
<dbReference type="PATRIC" id="fig|214092.21.peg.3321"/>
<dbReference type="eggNOG" id="COG1160">
    <property type="taxonomic scope" value="Bacteria"/>
</dbReference>
<dbReference type="HOGENOM" id="CLU_016077_6_2_6"/>
<dbReference type="OMA" id="CNLPQYV"/>
<dbReference type="OrthoDB" id="9805918at2"/>
<dbReference type="Proteomes" id="UP000000815">
    <property type="component" value="Chromosome"/>
</dbReference>
<dbReference type="Proteomes" id="UP000001019">
    <property type="component" value="Chromosome"/>
</dbReference>
<dbReference type="Proteomes" id="UP000002490">
    <property type="component" value="Chromosome"/>
</dbReference>
<dbReference type="GO" id="GO:0005525">
    <property type="term" value="F:GTP binding"/>
    <property type="evidence" value="ECO:0007669"/>
    <property type="project" value="UniProtKB-UniRule"/>
</dbReference>
<dbReference type="GO" id="GO:0043022">
    <property type="term" value="F:ribosome binding"/>
    <property type="evidence" value="ECO:0000318"/>
    <property type="project" value="GO_Central"/>
</dbReference>
<dbReference type="GO" id="GO:0042254">
    <property type="term" value="P:ribosome biogenesis"/>
    <property type="evidence" value="ECO:0007669"/>
    <property type="project" value="UniProtKB-KW"/>
</dbReference>
<dbReference type="CDD" id="cd01894">
    <property type="entry name" value="EngA1"/>
    <property type="match status" value="1"/>
</dbReference>
<dbReference type="CDD" id="cd01895">
    <property type="entry name" value="EngA2"/>
    <property type="match status" value="1"/>
</dbReference>
<dbReference type="FunFam" id="3.30.300.20:FF:000004">
    <property type="entry name" value="GTPase Der"/>
    <property type="match status" value="1"/>
</dbReference>
<dbReference type="FunFam" id="3.40.50.300:FF:000040">
    <property type="entry name" value="GTPase Der"/>
    <property type="match status" value="1"/>
</dbReference>
<dbReference type="FunFam" id="3.40.50.300:FF:000057">
    <property type="entry name" value="GTPase Der"/>
    <property type="match status" value="1"/>
</dbReference>
<dbReference type="Gene3D" id="3.30.300.20">
    <property type="match status" value="1"/>
</dbReference>
<dbReference type="Gene3D" id="3.40.50.300">
    <property type="entry name" value="P-loop containing nucleotide triphosphate hydrolases"/>
    <property type="match status" value="2"/>
</dbReference>
<dbReference type="HAMAP" id="MF_00195">
    <property type="entry name" value="GTPase_Der"/>
    <property type="match status" value="1"/>
</dbReference>
<dbReference type="InterPro" id="IPR031166">
    <property type="entry name" value="G_ENGA"/>
</dbReference>
<dbReference type="InterPro" id="IPR006073">
    <property type="entry name" value="GTP-bd"/>
</dbReference>
<dbReference type="InterPro" id="IPR016484">
    <property type="entry name" value="GTPase_Der"/>
</dbReference>
<dbReference type="InterPro" id="IPR032859">
    <property type="entry name" value="KH_dom-like"/>
</dbReference>
<dbReference type="InterPro" id="IPR015946">
    <property type="entry name" value="KH_dom-like_a/b"/>
</dbReference>
<dbReference type="InterPro" id="IPR027417">
    <property type="entry name" value="P-loop_NTPase"/>
</dbReference>
<dbReference type="InterPro" id="IPR005225">
    <property type="entry name" value="Small_GTP-bd"/>
</dbReference>
<dbReference type="NCBIfam" id="TIGR03594">
    <property type="entry name" value="GTPase_EngA"/>
    <property type="match status" value="1"/>
</dbReference>
<dbReference type="NCBIfam" id="TIGR00231">
    <property type="entry name" value="small_GTP"/>
    <property type="match status" value="2"/>
</dbReference>
<dbReference type="PANTHER" id="PTHR43834">
    <property type="entry name" value="GTPASE DER"/>
    <property type="match status" value="1"/>
</dbReference>
<dbReference type="PANTHER" id="PTHR43834:SF6">
    <property type="entry name" value="GTPASE DER"/>
    <property type="match status" value="1"/>
</dbReference>
<dbReference type="Pfam" id="PF14714">
    <property type="entry name" value="KH_dom-like"/>
    <property type="match status" value="1"/>
</dbReference>
<dbReference type="Pfam" id="PF01926">
    <property type="entry name" value="MMR_HSR1"/>
    <property type="match status" value="2"/>
</dbReference>
<dbReference type="PIRSF" id="PIRSF006485">
    <property type="entry name" value="GTP-binding_EngA"/>
    <property type="match status" value="1"/>
</dbReference>
<dbReference type="PRINTS" id="PR00326">
    <property type="entry name" value="GTP1OBG"/>
</dbReference>
<dbReference type="SUPFAM" id="SSF52540">
    <property type="entry name" value="P-loop containing nucleoside triphosphate hydrolases"/>
    <property type="match status" value="2"/>
</dbReference>
<dbReference type="PROSITE" id="PS51712">
    <property type="entry name" value="G_ENGA"/>
    <property type="match status" value="2"/>
</dbReference>
<comment type="function">
    <text evidence="1">GTPase that plays an essential role in the late steps of ribosome biogenesis.</text>
</comment>
<comment type="subunit">
    <text evidence="1">Associates with the 50S ribosomal subunit.</text>
</comment>
<comment type="similarity">
    <text evidence="1">Belongs to the TRAFAC class TrmE-Era-EngA-EngB-Septin-like GTPase superfamily. EngA (Der) GTPase family.</text>
</comment>
<reference key="1">
    <citation type="journal article" date="2001" name="Nature">
        <title>Genome sequence of Yersinia pestis, the causative agent of plague.</title>
        <authorList>
            <person name="Parkhill J."/>
            <person name="Wren B.W."/>
            <person name="Thomson N.R."/>
            <person name="Titball R.W."/>
            <person name="Holden M.T.G."/>
            <person name="Prentice M.B."/>
            <person name="Sebaihia M."/>
            <person name="James K.D."/>
            <person name="Churcher C.M."/>
            <person name="Mungall K.L."/>
            <person name="Baker S."/>
            <person name="Basham D."/>
            <person name="Bentley S.D."/>
            <person name="Brooks K."/>
            <person name="Cerdeno-Tarraga A.-M."/>
            <person name="Chillingworth T."/>
            <person name="Cronin A."/>
            <person name="Davies R.M."/>
            <person name="Davis P."/>
            <person name="Dougan G."/>
            <person name="Feltwell T."/>
            <person name="Hamlin N."/>
            <person name="Holroyd S."/>
            <person name="Jagels K."/>
            <person name="Karlyshev A.V."/>
            <person name="Leather S."/>
            <person name="Moule S."/>
            <person name="Oyston P.C.F."/>
            <person name="Quail M.A."/>
            <person name="Rutherford K.M."/>
            <person name="Simmonds M."/>
            <person name="Skelton J."/>
            <person name="Stevens K."/>
            <person name="Whitehead S."/>
            <person name="Barrell B.G."/>
        </authorList>
    </citation>
    <scope>NUCLEOTIDE SEQUENCE [LARGE SCALE GENOMIC DNA]</scope>
    <source>
        <strain>CO-92 / Biovar Orientalis</strain>
    </source>
</reference>
<reference key="2">
    <citation type="journal article" date="2002" name="J. Bacteriol.">
        <title>Genome sequence of Yersinia pestis KIM.</title>
        <authorList>
            <person name="Deng W."/>
            <person name="Burland V."/>
            <person name="Plunkett G. III"/>
            <person name="Boutin A."/>
            <person name="Mayhew G.F."/>
            <person name="Liss P."/>
            <person name="Perna N.T."/>
            <person name="Rose D.J."/>
            <person name="Mau B."/>
            <person name="Zhou S."/>
            <person name="Schwartz D.C."/>
            <person name="Fetherston J.D."/>
            <person name="Lindler L.E."/>
            <person name="Brubaker R.R."/>
            <person name="Plano G.V."/>
            <person name="Straley S.C."/>
            <person name="McDonough K.A."/>
            <person name="Nilles M.L."/>
            <person name="Matson J.S."/>
            <person name="Blattner F.R."/>
            <person name="Perry R.D."/>
        </authorList>
    </citation>
    <scope>NUCLEOTIDE SEQUENCE [LARGE SCALE GENOMIC DNA]</scope>
    <source>
        <strain>KIM10+ / Biovar Mediaevalis</strain>
    </source>
</reference>
<reference key="3">
    <citation type="journal article" date="2004" name="DNA Res.">
        <title>Complete genome sequence of Yersinia pestis strain 91001, an isolate avirulent to humans.</title>
        <authorList>
            <person name="Song Y."/>
            <person name="Tong Z."/>
            <person name="Wang J."/>
            <person name="Wang L."/>
            <person name="Guo Z."/>
            <person name="Han Y."/>
            <person name="Zhang J."/>
            <person name="Pei D."/>
            <person name="Zhou D."/>
            <person name="Qin H."/>
            <person name="Pang X."/>
            <person name="Han Y."/>
            <person name="Zhai J."/>
            <person name="Li M."/>
            <person name="Cui B."/>
            <person name="Qi Z."/>
            <person name="Jin L."/>
            <person name="Dai R."/>
            <person name="Chen F."/>
            <person name="Li S."/>
            <person name="Ye C."/>
            <person name="Du Z."/>
            <person name="Lin W."/>
            <person name="Wang J."/>
            <person name="Yu J."/>
            <person name="Yang H."/>
            <person name="Wang J."/>
            <person name="Huang P."/>
            <person name="Yang R."/>
        </authorList>
    </citation>
    <scope>NUCLEOTIDE SEQUENCE [LARGE SCALE GENOMIC DNA]</scope>
    <source>
        <strain>91001 / Biovar Mediaevalis</strain>
    </source>
</reference>
<evidence type="ECO:0000255" key="1">
    <source>
        <dbReference type="HAMAP-Rule" id="MF_00195"/>
    </source>
</evidence>
<name>DER_YERPE</name>
<accession>Q8ZCT9</accession>
<accession>Q0WD28</accession>